<organism>
    <name type="scientific">Treponema pallidum (strain Nichols)</name>
    <dbReference type="NCBI Taxonomy" id="243276"/>
    <lineage>
        <taxon>Bacteria</taxon>
        <taxon>Pseudomonadati</taxon>
        <taxon>Spirochaetota</taxon>
        <taxon>Spirochaetia</taxon>
        <taxon>Spirochaetales</taxon>
        <taxon>Treponemataceae</taxon>
        <taxon>Treponema</taxon>
    </lineage>
</organism>
<dbReference type="EMBL" id="AE000520">
    <property type="protein sequence ID" value="AAC65261.1"/>
    <property type="molecule type" value="Genomic_DNA"/>
</dbReference>
<dbReference type="PIR" id="D71345">
    <property type="entry name" value="D71345"/>
</dbReference>
<dbReference type="IntAct" id="O83290">
    <property type="interactions" value="1"/>
</dbReference>
<dbReference type="STRING" id="243276.TP_0266"/>
<dbReference type="EnsemblBacteria" id="AAC65261">
    <property type="protein sequence ID" value="AAC65261"/>
    <property type="gene ID" value="TP_0266"/>
</dbReference>
<dbReference type="KEGG" id="tpa:TP_0266"/>
<dbReference type="HOGENOM" id="CLU_3298111_0_0_12"/>
<dbReference type="Proteomes" id="UP000000811">
    <property type="component" value="Chromosome"/>
</dbReference>
<sequence length="41" mass="4905">MVRVQRRVLKNFMRVVGVDKGYRLWVEWLSCVCCGYVVRAE</sequence>
<keyword id="KW-1185">Reference proteome</keyword>
<name>Y266_TREPA</name>
<gene>
    <name type="ordered locus">TP_0266</name>
</gene>
<reference key="1">
    <citation type="journal article" date="1998" name="Science">
        <title>Complete genome sequence of Treponema pallidum, the syphilis spirochete.</title>
        <authorList>
            <person name="Fraser C.M."/>
            <person name="Norris S.J."/>
            <person name="Weinstock G.M."/>
            <person name="White O."/>
            <person name="Sutton G.G."/>
            <person name="Dodson R.J."/>
            <person name="Gwinn M.L."/>
            <person name="Hickey E.K."/>
            <person name="Clayton R.A."/>
            <person name="Ketchum K.A."/>
            <person name="Sodergren E."/>
            <person name="Hardham J.M."/>
            <person name="McLeod M.P."/>
            <person name="Salzberg S.L."/>
            <person name="Peterson J.D."/>
            <person name="Khalak H.G."/>
            <person name="Richardson D.L."/>
            <person name="Howell J.K."/>
            <person name="Chidambaram M."/>
            <person name="Utterback T.R."/>
            <person name="McDonald L.A."/>
            <person name="Artiach P."/>
            <person name="Bowman C."/>
            <person name="Cotton M.D."/>
            <person name="Fujii C."/>
            <person name="Garland S.A."/>
            <person name="Hatch B."/>
            <person name="Horst K."/>
            <person name="Roberts K.M."/>
            <person name="Sandusky M."/>
            <person name="Weidman J.F."/>
            <person name="Smith H.O."/>
            <person name="Venter J.C."/>
        </authorList>
    </citation>
    <scope>NUCLEOTIDE SEQUENCE [LARGE SCALE GENOMIC DNA]</scope>
    <source>
        <strain>Nichols</strain>
    </source>
</reference>
<feature type="chain" id="PRO_0000202221" description="Uncharacterized protein TP_0266">
    <location>
        <begin position="1"/>
        <end position="41"/>
    </location>
</feature>
<proteinExistence type="predicted"/>
<accession>O83290</accession>
<protein>
    <recommendedName>
        <fullName>Uncharacterized protein TP_0266</fullName>
    </recommendedName>
</protein>